<organism>
    <name type="scientific">Shigella boydii serotype 4 (strain Sb227)</name>
    <dbReference type="NCBI Taxonomy" id="300268"/>
    <lineage>
        <taxon>Bacteria</taxon>
        <taxon>Pseudomonadati</taxon>
        <taxon>Pseudomonadota</taxon>
        <taxon>Gammaproteobacteria</taxon>
        <taxon>Enterobacterales</taxon>
        <taxon>Enterobacteriaceae</taxon>
        <taxon>Shigella</taxon>
    </lineage>
</organism>
<sequence>MSLSTEATAKIVSEFGRDANDTGSTEVQVALLTAQINHLQGHFAEHKKDHHSRRGLLRMVSQRRKLLDYLKRKDVARYTQLIERLGLRR</sequence>
<gene>
    <name evidence="1" type="primary">rpsO</name>
    <name type="ordered locus">SBO_3217</name>
</gene>
<proteinExistence type="inferred from homology"/>
<keyword id="KW-0687">Ribonucleoprotein</keyword>
<keyword id="KW-0689">Ribosomal protein</keyword>
<keyword id="KW-0694">RNA-binding</keyword>
<keyword id="KW-0699">rRNA-binding</keyword>
<reference key="1">
    <citation type="journal article" date="2005" name="Nucleic Acids Res.">
        <title>Genome dynamics and diversity of Shigella species, the etiologic agents of bacillary dysentery.</title>
        <authorList>
            <person name="Yang F."/>
            <person name="Yang J."/>
            <person name="Zhang X."/>
            <person name="Chen L."/>
            <person name="Jiang Y."/>
            <person name="Yan Y."/>
            <person name="Tang X."/>
            <person name="Wang J."/>
            <person name="Xiong Z."/>
            <person name="Dong J."/>
            <person name="Xue Y."/>
            <person name="Zhu Y."/>
            <person name="Xu X."/>
            <person name="Sun L."/>
            <person name="Chen S."/>
            <person name="Nie H."/>
            <person name="Peng J."/>
            <person name="Xu J."/>
            <person name="Wang Y."/>
            <person name="Yuan Z."/>
            <person name="Wen Y."/>
            <person name="Yao Z."/>
            <person name="Shen Y."/>
            <person name="Qiang B."/>
            <person name="Hou Y."/>
            <person name="Yu J."/>
            <person name="Jin Q."/>
        </authorList>
    </citation>
    <scope>NUCLEOTIDE SEQUENCE [LARGE SCALE GENOMIC DNA]</scope>
    <source>
        <strain>Sb227</strain>
    </source>
</reference>
<name>RS15_SHIBS</name>
<dbReference type="EMBL" id="CP000036">
    <property type="protein sequence ID" value="ABB67714.1"/>
    <property type="molecule type" value="Genomic_DNA"/>
</dbReference>
<dbReference type="RefSeq" id="WP_000059466.1">
    <property type="nucleotide sequence ID" value="NC_007613.1"/>
</dbReference>
<dbReference type="SMR" id="Q31W44"/>
<dbReference type="GeneID" id="93778818"/>
<dbReference type="KEGG" id="sbo:SBO_3217"/>
<dbReference type="HOGENOM" id="CLU_148518_0_0_6"/>
<dbReference type="Proteomes" id="UP000007067">
    <property type="component" value="Chromosome"/>
</dbReference>
<dbReference type="GO" id="GO:0022627">
    <property type="term" value="C:cytosolic small ribosomal subunit"/>
    <property type="evidence" value="ECO:0007669"/>
    <property type="project" value="TreeGrafter"/>
</dbReference>
<dbReference type="GO" id="GO:0019843">
    <property type="term" value="F:rRNA binding"/>
    <property type="evidence" value="ECO:0007669"/>
    <property type="project" value="UniProtKB-UniRule"/>
</dbReference>
<dbReference type="GO" id="GO:0003735">
    <property type="term" value="F:structural constituent of ribosome"/>
    <property type="evidence" value="ECO:0007669"/>
    <property type="project" value="InterPro"/>
</dbReference>
<dbReference type="GO" id="GO:0006412">
    <property type="term" value="P:translation"/>
    <property type="evidence" value="ECO:0007669"/>
    <property type="project" value="UniProtKB-UniRule"/>
</dbReference>
<dbReference type="CDD" id="cd00353">
    <property type="entry name" value="Ribosomal_S15p_S13e"/>
    <property type="match status" value="1"/>
</dbReference>
<dbReference type="FunFam" id="1.10.287.10:FF:000002">
    <property type="entry name" value="30S ribosomal protein S15"/>
    <property type="match status" value="1"/>
</dbReference>
<dbReference type="Gene3D" id="6.10.250.3130">
    <property type="match status" value="1"/>
</dbReference>
<dbReference type="Gene3D" id="1.10.287.10">
    <property type="entry name" value="S15/NS1, RNA-binding"/>
    <property type="match status" value="1"/>
</dbReference>
<dbReference type="HAMAP" id="MF_01343_B">
    <property type="entry name" value="Ribosomal_uS15_B"/>
    <property type="match status" value="1"/>
</dbReference>
<dbReference type="InterPro" id="IPR000589">
    <property type="entry name" value="Ribosomal_uS15"/>
</dbReference>
<dbReference type="InterPro" id="IPR005290">
    <property type="entry name" value="Ribosomal_uS15_bac-type"/>
</dbReference>
<dbReference type="InterPro" id="IPR009068">
    <property type="entry name" value="uS15_NS1_RNA-bd_sf"/>
</dbReference>
<dbReference type="NCBIfam" id="TIGR00952">
    <property type="entry name" value="S15_bact"/>
    <property type="match status" value="1"/>
</dbReference>
<dbReference type="PANTHER" id="PTHR23321">
    <property type="entry name" value="RIBOSOMAL PROTEIN S15, BACTERIAL AND ORGANELLAR"/>
    <property type="match status" value="1"/>
</dbReference>
<dbReference type="PANTHER" id="PTHR23321:SF26">
    <property type="entry name" value="SMALL RIBOSOMAL SUBUNIT PROTEIN US15M"/>
    <property type="match status" value="1"/>
</dbReference>
<dbReference type="Pfam" id="PF00312">
    <property type="entry name" value="Ribosomal_S15"/>
    <property type="match status" value="1"/>
</dbReference>
<dbReference type="SMART" id="SM01387">
    <property type="entry name" value="Ribosomal_S15"/>
    <property type="match status" value="1"/>
</dbReference>
<dbReference type="SUPFAM" id="SSF47060">
    <property type="entry name" value="S15/NS1 RNA-binding domain"/>
    <property type="match status" value="1"/>
</dbReference>
<dbReference type="PROSITE" id="PS00362">
    <property type="entry name" value="RIBOSOMAL_S15"/>
    <property type="match status" value="1"/>
</dbReference>
<evidence type="ECO:0000255" key="1">
    <source>
        <dbReference type="HAMAP-Rule" id="MF_01343"/>
    </source>
</evidence>
<evidence type="ECO:0000305" key="2"/>
<accession>Q31W44</accession>
<protein>
    <recommendedName>
        <fullName evidence="1">Small ribosomal subunit protein uS15</fullName>
    </recommendedName>
    <alternativeName>
        <fullName evidence="2">30S ribosomal protein S15</fullName>
    </alternativeName>
</protein>
<feature type="chain" id="PRO_0000115534" description="Small ribosomal subunit protein uS15">
    <location>
        <begin position="1"/>
        <end position="89"/>
    </location>
</feature>
<comment type="function">
    <text evidence="1">One of the primary rRNA binding proteins, it binds directly to 16S rRNA where it helps nucleate assembly of the platform of the 30S subunit by binding and bridging several RNA helices of the 16S rRNA.</text>
</comment>
<comment type="function">
    <text evidence="1">Forms an intersubunit bridge (bridge B4) with the 23S rRNA of the 50S subunit in the ribosome.</text>
</comment>
<comment type="subunit">
    <text evidence="1">Part of the 30S ribosomal subunit. Forms a bridge to the 50S subunit in the 70S ribosome, contacting the 23S rRNA.</text>
</comment>
<comment type="similarity">
    <text evidence="1">Belongs to the universal ribosomal protein uS15 family.</text>
</comment>